<gene>
    <name evidence="1" type="primary">GET1</name>
    <name type="ORF">PABG_04181</name>
</gene>
<sequence length="207" mass="23471">MPSLLISVLFLHIAIYIINTIAASTIDSLLWLIYMKLPTSASCIAREQHQMKLEVVQLKREMNATSSQDEFAKWAKLRRRHDKALEEYEVKNKQFSRFKSFFDVAVKALRWAGTSGLIVFLQFWFSKTPIFTLPPSWIPWQVEWVLSFPRAPMGTVSIQVWGGACAVVVALIGEAIGATVRYLYASKDSMEAIKVGAGAVEKEKKRQ</sequence>
<reference key="1">
    <citation type="journal article" date="2011" name="PLoS Genet.">
        <title>Comparative genomic analysis of human fungal pathogens causing paracoccidioidomycosis.</title>
        <authorList>
            <person name="Desjardins C.A."/>
            <person name="Champion M.D."/>
            <person name="Holder J.W."/>
            <person name="Muszewska A."/>
            <person name="Goldberg J."/>
            <person name="Bailao A.M."/>
            <person name="Brigido M.M."/>
            <person name="Ferreira M.E."/>
            <person name="Garcia A.M."/>
            <person name="Grynberg M."/>
            <person name="Gujja S."/>
            <person name="Heiman D.I."/>
            <person name="Henn M.R."/>
            <person name="Kodira C.D."/>
            <person name="Leon-Narvaez H."/>
            <person name="Longo L.V.G."/>
            <person name="Ma L.-J."/>
            <person name="Malavazi I."/>
            <person name="Matsuo A.L."/>
            <person name="Morais F.V."/>
            <person name="Pereira M."/>
            <person name="Rodriguez-Brito S."/>
            <person name="Sakthikumar S."/>
            <person name="Salem-Izacc S.M."/>
            <person name="Sykes S.M."/>
            <person name="Teixeira M.M."/>
            <person name="Vallejo M.C."/>
            <person name="Walter M.E."/>
            <person name="Yandava C."/>
            <person name="Young S."/>
            <person name="Zeng Q."/>
            <person name="Zucker J."/>
            <person name="Felipe M.S."/>
            <person name="Goldman G.H."/>
            <person name="Haas B.J."/>
            <person name="McEwen J.G."/>
            <person name="Nino-Vega G."/>
            <person name="Puccia R."/>
            <person name="San-Blas G."/>
            <person name="Soares C.M."/>
            <person name="Birren B.W."/>
            <person name="Cuomo C.A."/>
        </authorList>
    </citation>
    <scope>NUCLEOTIDE SEQUENCE [LARGE SCALE GENOMIC DNA]</scope>
    <source>
        <strain>Pb03</strain>
    </source>
</reference>
<accession>C0S9J4</accession>
<comment type="function">
    <text evidence="1">Required for the post-translational delivery of tail-anchored (TA) proteins to the endoplasmic reticulum. Acts as a membrane receptor for soluble GET3, which recognizes and selectively binds the transmembrane domain of TA proteins in the cytosol.</text>
</comment>
<comment type="subunit">
    <text evidence="1">Interacts with GET3.</text>
</comment>
<comment type="subcellular location">
    <subcellularLocation>
        <location evidence="1">Endoplasmic reticulum membrane</location>
        <topology evidence="1">Multi-pass membrane protein</topology>
    </subcellularLocation>
</comment>
<comment type="similarity">
    <text evidence="1">Belongs to the WRB/GET1 family.</text>
</comment>
<evidence type="ECO:0000255" key="1">
    <source>
        <dbReference type="HAMAP-Rule" id="MF_03113"/>
    </source>
</evidence>
<feature type="chain" id="PRO_0000388605" description="Protein GET1">
    <location>
        <begin position="1"/>
        <end position="207"/>
    </location>
</feature>
<feature type="topological domain" description="Lumenal" evidence="1">
    <location>
        <begin position="1"/>
        <end position="4"/>
    </location>
</feature>
<feature type="transmembrane region" description="Helical" evidence="1">
    <location>
        <begin position="5"/>
        <end position="24"/>
    </location>
</feature>
<feature type="topological domain" description="Cytoplasmic" evidence="1">
    <location>
        <begin position="25"/>
        <end position="110"/>
    </location>
</feature>
<feature type="transmembrane region" description="Helical" evidence="1">
    <location>
        <begin position="111"/>
        <end position="131"/>
    </location>
</feature>
<feature type="topological domain" description="Lumenal" evidence="1">
    <location>
        <begin position="132"/>
        <end position="155"/>
    </location>
</feature>
<feature type="transmembrane region" description="Helical" evidence="1">
    <location>
        <begin position="156"/>
        <end position="172"/>
    </location>
</feature>
<feature type="topological domain" description="Cytoplasmic" evidence="1">
    <location>
        <begin position="173"/>
        <end position="207"/>
    </location>
</feature>
<feature type="coiled-coil region" evidence="1">
    <location>
        <begin position="44"/>
        <end position="97"/>
    </location>
</feature>
<keyword id="KW-0175">Coiled coil</keyword>
<keyword id="KW-0256">Endoplasmic reticulum</keyword>
<keyword id="KW-0472">Membrane</keyword>
<keyword id="KW-0812">Transmembrane</keyword>
<keyword id="KW-1133">Transmembrane helix</keyword>
<keyword id="KW-0813">Transport</keyword>
<proteinExistence type="inferred from homology"/>
<name>GET1_PARBP</name>
<protein>
    <recommendedName>
        <fullName evidence="1">Protein GET1</fullName>
    </recommendedName>
    <alternativeName>
        <fullName evidence="1">Guided entry of tail-anchored proteins 1</fullName>
    </alternativeName>
</protein>
<dbReference type="EMBL" id="KN305536">
    <property type="protein sequence ID" value="EEH21970.1"/>
    <property type="molecule type" value="Genomic_DNA"/>
</dbReference>
<dbReference type="SMR" id="C0S9J4"/>
<dbReference type="VEuPathDB" id="FungiDB:PABG_04181"/>
<dbReference type="HOGENOM" id="CLU_089418_1_0_1"/>
<dbReference type="OrthoDB" id="9924at33183"/>
<dbReference type="GO" id="GO:0005789">
    <property type="term" value="C:endoplasmic reticulum membrane"/>
    <property type="evidence" value="ECO:0007669"/>
    <property type="project" value="UniProtKB-SubCell"/>
</dbReference>
<dbReference type="GO" id="GO:0043529">
    <property type="term" value="C:GET complex"/>
    <property type="evidence" value="ECO:0007669"/>
    <property type="project" value="InterPro"/>
</dbReference>
<dbReference type="GO" id="GO:0043495">
    <property type="term" value="F:protein-membrane adaptor activity"/>
    <property type="evidence" value="ECO:0007669"/>
    <property type="project" value="TreeGrafter"/>
</dbReference>
<dbReference type="GO" id="GO:0071816">
    <property type="term" value="P:tail-anchored membrane protein insertion into ER membrane"/>
    <property type="evidence" value="ECO:0007669"/>
    <property type="project" value="InterPro"/>
</dbReference>
<dbReference type="FunFam" id="1.10.287.660:FF:000006">
    <property type="entry name" value="Protein GET1"/>
    <property type="match status" value="1"/>
</dbReference>
<dbReference type="Gene3D" id="1.10.287.660">
    <property type="entry name" value="Helix hairpin bin"/>
    <property type="match status" value="1"/>
</dbReference>
<dbReference type="HAMAP" id="MF_03113">
    <property type="entry name" value="Get1"/>
    <property type="match status" value="1"/>
</dbReference>
<dbReference type="InterPro" id="IPR028945">
    <property type="entry name" value="Get1"/>
</dbReference>
<dbReference type="InterPro" id="IPR027538">
    <property type="entry name" value="Get1_fungi"/>
</dbReference>
<dbReference type="InterPro" id="IPR029012">
    <property type="entry name" value="Helix_hairpin_bin_sf"/>
</dbReference>
<dbReference type="PANTHER" id="PTHR42650:SF1">
    <property type="entry name" value="GUIDED ENTRY OF TAIL-ANCHORED PROTEINS FACTOR 1"/>
    <property type="match status" value="1"/>
</dbReference>
<dbReference type="PANTHER" id="PTHR42650">
    <property type="entry name" value="TAIL-ANCHORED PROTEIN INSERTION RECEPTOR WRB"/>
    <property type="match status" value="1"/>
</dbReference>
<dbReference type="Pfam" id="PF04420">
    <property type="entry name" value="CHD5"/>
    <property type="match status" value="1"/>
</dbReference>
<organism>
    <name type="scientific">Paracoccidioides brasiliensis (strain Pb03)</name>
    <dbReference type="NCBI Taxonomy" id="482561"/>
    <lineage>
        <taxon>Eukaryota</taxon>
        <taxon>Fungi</taxon>
        <taxon>Dikarya</taxon>
        <taxon>Ascomycota</taxon>
        <taxon>Pezizomycotina</taxon>
        <taxon>Eurotiomycetes</taxon>
        <taxon>Eurotiomycetidae</taxon>
        <taxon>Onygenales</taxon>
        <taxon>Ajellomycetaceae</taxon>
        <taxon>Paracoccidioides</taxon>
    </lineage>
</organism>